<protein>
    <recommendedName>
        <fullName>ETS homologous factor</fullName>
    </recommendedName>
    <alternativeName>
        <fullName>ETS domain-containing transcription factor</fullName>
    </alternativeName>
</protein>
<gene>
    <name type="primary">EHF</name>
</gene>
<proteinExistence type="inferred from homology"/>
<name>EHF_PANPA</name>
<evidence type="ECO:0000250" key="1"/>
<evidence type="ECO:0000255" key="2">
    <source>
        <dbReference type="PROSITE-ProRule" id="PRU00237"/>
    </source>
</evidence>
<evidence type="ECO:0000255" key="3">
    <source>
        <dbReference type="PROSITE-ProRule" id="PRU00762"/>
    </source>
</evidence>
<evidence type="ECO:0000256" key="4">
    <source>
        <dbReference type="SAM" id="MobiDB-lite"/>
    </source>
</evidence>
<evidence type="ECO:0000305" key="5"/>
<keyword id="KW-0238">DNA-binding</keyword>
<keyword id="KW-0539">Nucleus</keyword>
<keyword id="KW-1185">Reference proteome</keyword>
<keyword id="KW-0804">Transcription</keyword>
<keyword id="KW-0805">Transcription regulation</keyword>
<accession>A1YG61</accession>
<dbReference type="EMBL" id="DQ977224">
    <property type="protein sequence ID" value="ABM54286.1"/>
    <property type="molecule type" value="Genomic_DNA"/>
</dbReference>
<dbReference type="RefSeq" id="XP_008954101.1">
    <property type="nucleotide sequence ID" value="XM_008955853.2"/>
</dbReference>
<dbReference type="SMR" id="A1YG61"/>
<dbReference type="STRING" id="9597.ENSPPAP00000025562"/>
<dbReference type="Ensembl" id="ENSPPAT00000048390.1">
    <property type="protein sequence ID" value="ENSPPAP00000025562.1"/>
    <property type="gene ID" value="ENSPPAG00000035904.1"/>
</dbReference>
<dbReference type="eggNOG" id="KOG3804">
    <property type="taxonomic scope" value="Eukaryota"/>
</dbReference>
<dbReference type="GeneTree" id="ENSGT00940000159310"/>
<dbReference type="OMA" id="MMDSKTF"/>
<dbReference type="Proteomes" id="UP000240080">
    <property type="component" value="Chromosome 11"/>
</dbReference>
<dbReference type="Bgee" id="ENSPPAG00000035904">
    <property type="expression patterns" value="Expressed in adult mammalian kidney and 1 other cell type or tissue"/>
</dbReference>
<dbReference type="GO" id="GO:0005794">
    <property type="term" value="C:Golgi apparatus"/>
    <property type="evidence" value="ECO:0007669"/>
    <property type="project" value="Ensembl"/>
</dbReference>
<dbReference type="GO" id="GO:0005654">
    <property type="term" value="C:nucleoplasm"/>
    <property type="evidence" value="ECO:0007669"/>
    <property type="project" value="Ensembl"/>
</dbReference>
<dbReference type="GO" id="GO:0001228">
    <property type="term" value="F:DNA-binding transcription activator activity, RNA polymerase II-specific"/>
    <property type="evidence" value="ECO:0007669"/>
    <property type="project" value="Ensembl"/>
</dbReference>
<dbReference type="GO" id="GO:0000978">
    <property type="term" value="F:RNA polymerase II cis-regulatory region sequence-specific DNA binding"/>
    <property type="evidence" value="ECO:0007669"/>
    <property type="project" value="Ensembl"/>
</dbReference>
<dbReference type="GO" id="GO:0030855">
    <property type="term" value="P:epithelial cell differentiation"/>
    <property type="evidence" value="ECO:0007669"/>
    <property type="project" value="Ensembl"/>
</dbReference>
<dbReference type="CDD" id="cd08539">
    <property type="entry name" value="SAM_PNT-ESE-3-like"/>
    <property type="match status" value="1"/>
</dbReference>
<dbReference type="FunFam" id="1.10.10.10:FF:000136">
    <property type="entry name" value="ETS homologous factor isoform X1"/>
    <property type="match status" value="1"/>
</dbReference>
<dbReference type="FunFam" id="1.10.150.50:FF:000026">
    <property type="entry name" value="ETS homologous factor isoform X1"/>
    <property type="match status" value="1"/>
</dbReference>
<dbReference type="Gene3D" id="1.10.150.50">
    <property type="entry name" value="Transcription Factor, Ets-1"/>
    <property type="match status" value="1"/>
</dbReference>
<dbReference type="Gene3D" id="1.10.10.10">
    <property type="entry name" value="Winged helix-like DNA-binding domain superfamily/Winged helix DNA-binding domain"/>
    <property type="match status" value="1"/>
</dbReference>
<dbReference type="InterPro" id="IPR033071">
    <property type="entry name" value="EHF_SAM_Pointed_dom"/>
</dbReference>
<dbReference type="InterPro" id="IPR000418">
    <property type="entry name" value="Ets_dom"/>
</dbReference>
<dbReference type="InterPro" id="IPR046328">
    <property type="entry name" value="ETS_fam"/>
</dbReference>
<dbReference type="InterPro" id="IPR003118">
    <property type="entry name" value="Pointed_dom"/>
</dbReference>
<dbReference type="InterPro" id="IPR013761">
    <property type="entry name" value="SAM/pointed_sf"/>
</dbReference>
<dbReference type="InterPro" id="IPR036388">
    <property type="entry name" value="WH-like_DNA-bd_sf"/>
</dbReference>
<dbReference type="InterPro" id="IPR036390">
    <property type="entry name" value="WH_DNA-bd_sf"/>
</dbReference>
<dbReference type="PANTHER" id="PTHR11849">
    <property type="entry name" value="ETS"/>
    <property type="match status" value="1"/>
</dbReference>
<dbReference type="PANTHER" id="PTHR11849:SF171">
    <property type="entry name" value="ETS HOMOLOGOUS FACTOR"/>
    <property type="match status" value="1"/>
</dbReference>
<dbReference type="Pfam" id="PF00178">
    <property type="entry name" value="Ets"/>
    <property type="match status" value="1"/>
</dbReference>
<dbReference type="Pfam" id="PF02198">
    <property type="entry name" value="SAM_PNT"/>
    <property type="match status" value="1"/>
</dbReference>
<dbReference type="PRINTS" id="PR00454">
    <property type="entry name" value="ETSDOMAIN"/>
</dbReference>
<dbReference type="SMART" id="SM00413">
    <property type="entry name" value="ETS"/>
    <property type="match status" value="1"/>
</dbReference>
<dbReference type="SMART" id="SM00251">
    <property type="entry name" value="SAM_PNT"/>
    <property type="match status" value="1"/>
</dbReference>
<dbReference type="SUPFAM" id="SSF47769">
    <property type="entry name" value="SAM/Pointed domain"/>
    <property type="match status" value="1"/>
</dbReference>
<dbReference type="SUPFAM" id="SSF46785">
    <property type="entry name" value="Winged helix' DNA-binding domain"/>
    <property type="match status" value="1"/>
</dbReference>
<dbReference type="PROSITE" id="PS50061">
    <property type="entry name" value="ETS_DOMAIN_3"/>
    <property type="match status" value="1"/>
</dbReference>
<dbReference type="PROSITE" id="PS51433">
    <property type="entry name" value="PNT"/>
    <property type="match status" value="1"/>
</dbReference>
<sequence length="300" mass="34863">MILEGGGVMNLNPGNNLLHQPPTWTDSYSTCNVSSGFFGGQWHEIHPQYWTKYQVWEWLQHLLDTNQLDASCIPFQEFDINGEHLCSMSLQEFTRAAGTAGQLLYSNLQHLKWNGQCSSDLFQSTHNVIVKTEQTEPSIVNTWKDENYLYDTNYGSTVDLLDSKTFCRAQISMTTTSHLPVAESPDMKKEQDPPAKCHTKKHNPRGTHLWEFIRDILLNPDKNPGLIKWEDRSEGVFRFLKSEAVAQLWGKKKNNSSMTYEKLSRAMRYYYKREILERVDGRRLVYKFGKNARGWRENEN</sequence>
<organism>
    <name type="scientific">Pan paniscus</name>
    <name type="common">Pygmy chimpanzee</name>
    <name type="synonym">Bonobo</name>
    <dbReference type="NCBI Taxonomy" id="9597"/>
    <lineage>
        <taxon>Eukaryota</taxon>
        <taxon>Metazoa</taxon>
        <taxon>Chordata</taxon>
        <taxon>Craniata</taxon>
        <taxon>Vertebrata</taxon>
        <taxon>Euteleostomi</taxon>
        <taxon>Mammalia</taxon>
        <taxon>Eutheria</taxon>
        <taxon>Euarchontoglires</taxon>
        <taxon>Primates</taxon>
        <taxon>Haplorrhini</taxon>
        <taxon>Catarrhini</taxon>
        <taxon>Hominidae</taxon>
        <taxon>Pan</taxon>
    </lineage>
</organism>
<reference key="1">
    <citation type="submission" date="2006-08" db="EMBL/GenBank/DDBJ databases">
        <title>Positive selection in transcription factor genes on the human lineage.</title>
        <authorList>
            <person name="Nickel G.C."/>
            <person name="Tefft D.L."/>
            <person name="Trevarthen K."/>
            <person name="Funt J."/>
            <person name="Adams M.D."/>
        </authorList>
    </citation>
    <scope>NUCLEOTIDE SEQUENCE [GENOMIC DNA]</scope>
</reference>
<comment type="function">
    <text evidence="1">Transcriptional activator that may play a role in regulating epithelial cell differentiation and proliferation. May act as a repressor for a specific subset of ETS/AP-1-responsive genes, and as a modulator of the nuclear response to mitogen-activated protein kinase signaling cascades. Binds to DNA sequences containing the consensus nucleotide core sequence GGAA. Involved in regulation of TNFRSF10B/DR5 expression through Ets-binding sequences on the TNFRSF10B/DR5 promoter (By similarity).</text>
</comment>
<comment type="subcellular location">
    <subcellularLocation>
        <location evidence="2">Nucleus</location>
    </subcellularLocation>
</comment>
<comment type="domain">
    <text evidence="1">The PNT domain acts as a transcriptional activator.</text>
</comment>
<comment type="similarity">
    <text evidence="5">Belongs to the ETS family.</text>
</comment>
<feature type="chain" id="PRO_0000285518" description="ETS homologous factor">
    <location>
        <begin position="1"/>
        <end position="300"/>
    </location>
</feature>
<feature type="domain" description="PNT" evidence="3">
    <location>
        <begin position="29"/>
        <end position="115"/>
    </location>
</feature>
<feature type="DNA-binding region" description="ETS" evidence="2">
    <location>
        <begin position="207"/>
        <end position="289"/>
    </location>
</feature>
<feature type="region of interest" description="Disordered" evidence="4">
    <location>
        <begin position="183"/>
        <end position="202"/>
    </location>
</feature>
<feature type="compositionally biased region" description="Basic and acidic residues" evidence="4">
    <location>
        <begin position="185"/>
        <end position="195"/>
    </location>
</feature>